<gene>
    <name evidence="1" type="primary">udk</name>
    <name type="ordered locus">LMHCC_1073</name>
</gene>
<evidence type="ECO:0000255" key="1">
    <source>
        <dbReference type="HAMAP-Rule" id="MF_00551"/>
    </source>
</evidence>
<keyword id="KW-0067">ATP-binding</keyword>
<keyword id="KW-0963">Cytoplasm</keyword>
<keyword id="KW-0418">Kinase</keyword>
<keyword id="KW-0547">Nucleotide-binding</keyword>
<keyword id="KW-0808">Transferase</keyword>
<feature type="chain" id="PRO_1000200516" description="Uridine kinase">
    <location>
        <begin position="1"/>
        <end position="209"/>
    </location>
</feature>
<feature type="binding site" evidence="1">
    <location>
        <begin position="12"/>
        <end position="19"/>
    </location>
    <ligand>
        <name>ATP</name>
        <dbReference type="ChEBI" id="CHEBI:30616"/>
    </ligand>
</feature>
<name>URK_LISMH</name>
<comment type="catalytic activity">
    <reaction evidence="1">
        <text>uridine + ATP = UMP + ADP + H(+)</text>
        <dbReference type="Rhea" id="RHEA:16825"/>
        <dbReference type="ChEBI" id="CHEBI:15378"/>
        <dbReference type="ChEBI" id="CHEBI:16704"/>
        <dbReference type="ChEBI" id="CHEBI:30616"/>
        <dbReference type="ChEBI" id="CHEBI:57865"/>
        <dbReference type="ChEBI" id="CHEBI:456216"/>
        <dbReference type="EC" id="2.7.1.48"/>
    </reaction>
</comment>
<comment type="catalytic activity">
    <reaction evidence="1">
        <text>cytidine + ATP = CMP + ADP + H(+)</text>
        <dbReference type="Rhea" id="RHEA:24674"/>
        <dbReference type="ChEBI" id="CHEBI:15378"/>
        <dbReference type="ChEBI" id="CHEBI:17562"/>
        <dbReference type="ChEBI" id="CHEBI:30616"/>
        <dbReference type="ChEBI" id="CHEBI:60377"/>
        <dbReference type="ChEBI" id="CHEBI:456216"/>
        <dbReference type="EC" id="2.7.1.48"/>
    </reaction>
</comment>
<comment type="pathway">
    <text evidence="1">Pyrimidine metabolism; CTP biosynthesis via salvage pathway; CTP from cytidine: step 1/3.</text>
</comment>
<comment type="pathway">
    <text evidence="1">Pyrimidine metabolism; UMP biosynthesis via salvage pathway; UMP from uridine: step 1/1.</text>
</comment>
<comment type="subcellular location">
    <subcellularLocation>
        <location evidence="1">Cytoplasm</location>
    </subcellularLocation>
</comment>
<comment type="similarity">
    <text evidence="1">Belongs to the uridine kinase family.</text>
</comment>
<proteinExistence type="inferred from homology"/>
<reference key="1">
    <citation type="journal article" date="2011" name="J. Bacteriol.">
        <title>Genome sequence of lineage III Listeria monocytogenes strain HCC23.</title>
        <authorList>
            <person name="Steele C.L."/>
            <person name="Donaldson J.R."/>
            <person name="Paul D."/>
            <person name="Banes M.M."/>
            <person name="Arick T."/>
            <person name="Bridges S.M."/>
            <person name="Lawrence M.L."/>
        </authorList>
    </citation>
    <scope>NUCLEOTIDE SEQUENCE [LARGE SCALE GENOMIC DNA]</scope>
    <source>
        <strain>HCC23</strain>
    </source>
</reference>
<organism>
    <name type="scientific">Listeria monocytogenes serotype 4a (strain HCC23)</name>
    <dbReference type="NCBI Taxonomy" id="552536"/>
    <lineage>
        <taxon>Bacteria</taxon>
        <taxon>Bacillati</taxon>
        <taxon>Bacillota</taxon>
        <taxon>Bacilli</taxon>
        <taxon>Bacillales</taxon>
        <taxon>Listeriaceae</taxon>
        <taxon>Listeria</taxon>
    </lineage>
</organism>
<protein>
    <recommendedName>
        <fullName evidence="1">Uridine kinase</fullName>
        <ecNumber evidence="1">2.7.1.48</ecNumber>
    </recommendedName>
    <alternativeName>
        <fullName evidence="1">Cytidine monophosphokinase</fullName>
    </alternativeName>
    <alternativeName>
        <fullName evidence="1">Uridine monophosphokinase</fullName>
    </alternativeName>
</protein>
<dbReference type="EC" id="2.7.1.48" evidence="1"/>
<dbReference type="EMBL" id="CP001175">
    <property type="protein sequence ID" value="ACK39421.1"/>
    <property type="molecule type" value="Genomic_DNA"/>
</dbReference>
<dbReference type="RefSeq" id="WP_003725973.1">
    <property type="nucleotide sequence ID" value="NC_011660.1"/>
</dbReference>
<dbReference type="SMR" id="B8DE13"/>
<dbReference type="KEGG" id="lmh:LMHCC_1073"/>
<dbReference type="HOGENOM" id="CLU_021278_1_2_9"/>
<dbReference type="UniPathway" id="UPA00574">
    <property type="reaction ID" value="UER00637"/>
</dbReference>
<dbReference type="UniPathway" id="UPA00579">
    <property type="reaction ID" value="UER00640"/>
</dbReference>
<dbReference type="GO" id="GO:0005737">
    <property type="term" value="C:cytoplasm"/>
    <property type="evidence" value="ECO:0007669"/>
    <property type="project" value="UniProtKB-SubCell"/>
</dbReference>
<dbReference type="GO" id="GO:0005524">
    <property type="term" value="F:ATP binding"/>
    <property type="evidence" value="ECO:0007669"/>
    <property type="project" value="UniProtKB-UniRule"/>
</dbReference>
<dbReference type="GO" id="GO:0043771">
    <property type="term" value="F:cytidine kinase activity"/>
    <property type="evidence" value="ECO:0007669"/>
    <property type="project" value="RHEA"/>
</dbReference>
<dbReference type="GO" id="GO:0004849">
    <property type="term" value="F:uridine kinase activity"/>
    <property type="evidence" value="ECO:0007669"/>
    <property type="project" value="UniProtKB-UniRule"/>
</dbReference>
<dbReference type="GO" id="GO:0044211">
    <property type="term" value="P:CTP salvage"/>
    <property type="evidence" value="ECO:0007669"/>
    <property type="project" value="UniProtKB-UniRule"/>
</dbReference>
<dbReference type="GO" id="GO:0044206">
    <property type="term" value="P:UMP salvage"/>
    <property type="evidence" value="ECO:0007669"/>
    <property type="project" value="UniProtKB-UniRule"/>
</dbReference>
<dbReference type="CDD" id="cd02023">
    <property type="entry name" value="UMPK"/>
    <property type="match status" value="1"/>
</dbReference>
<dbReference type="Gene3D" id="3.40.50.300">
    <property type="entry name" value="P-loop containing nucleotide triphosphate hydrolases"/>
    <property type="match status" value="1"/>
</dbReference>
<dbReference type="HAMAP" id="MF_00551">
    <property type="entry name" value="Uridine_kinase"/>
    <property type="match status" value="1"/>
</dbReference>
<dbReference type="InterPro" id="IPR027417">
    <property type="entry name" value="P-loop_NTPase"/>
</dbReference>
<dbReference type="InterPro" id="IPR006083">
    <property type="entry name" value="PRK/URK"/>
</dbReference>
<dbReference type="InterPro" id="IPR026008">
    <property type="entry name" value="Uridine_kinase"/>
</dbReference>
<dbReference type="InterPro" id="IPR000764">
    <property type="entry name" value="Uridine_kinase-like"/>
</dbReference>
<dbReference type="NCBIfam" id="NF004018">
    <property type="entry name" value="PRK05480.1"/>
    <property type="match status" value="1"/>
</dbReference>
<dbReference type="NCBIfam" id="TIGR00235">
    <property type="entry name" value="udk"/>
    <property type="match status" value="1"/>
</dbReference>
<dbReference type="PANTHER" id="PTHR10285">
    <property type="entry name" value="URIDINE KINASE"/>
    <property type="match status" value="1"/>
</dbReference>
<dbReference type="Pfam" id="PF00485">
    <property type="entry name" value="PRK"/>
    <property type="match status" value="1"/>
</dbReference>
<dbReference type="PRINTS" id="PR00988">
    <property type="entry name" value="URIDINKINASE"/>
</dbReference>
<dbReference type="SUPFAM" id="SSF52540">
    <property type="entry name" value="P-loop containing nucleoside triphosphate hydrolases"/>
    <property type="match status" value="1"/>
</dbReference>
<accession>B8DE13</accession>
<sequence>MTKKPIVVGVTGGSGSGKTSVTKAICDHFSGHSILMIAQDVYYHDQANISFEDRLKVNYDHPLAFDTDLLISHIAALRRYETIEKPIYDYAKYTRKKEVEIQEPREVIILEGILILEDKRLRDLMDIKVYVDTDDDIRFIRRLLRDMKERGRTMDSVIEQYLSVVKPMHNEFIEPTKKFADIIIPEGGENHVAIDLMTTKIESILQKHV</sequence>